<reference key="1">
    <citation type="journal article" date="2004" name="Proc. Natl. Acad. Sci. U.S.A.">
        <title>Complete genomes of two clinical Staphylococcus aureus strains: evidence for the rapid evolution of virulence and drug resistance.</title>
        <authorList>
            <person name="Holden M.T.G."/>
            <person name="Feil E.J."/>
            <person name="Lindsay J.A."/>
            <person name="Peacock S.J."/>
            <person name="Day N.P.J."/>
            <person name="Enright M.C."/>
            <person name="Foster T.J."/>
            <person name="Moore C.E."/>
            <person name="Hurst L."/>
            <person name="Atkin R."/>
            <person name="Barron A."/>
            <person name="Bason N."/>
            <person name="Bentley S.D."/>
            <person name="Chillingworth C."/>
            <person name="Chillingworth T."/>
            <person name="Churcher C."/>
            <person name="Clark L."/>
            <person name="Corton C."/>
            <person name="Cronin A."/>
            <person name="Doggett J."/>
            <person name="Dowd L."/>
            <person name="Feltwell T."/>
            <person name="Hance Z."/>
            <person name="Harris B."/>
            <person name="Hauser H."/>
            <person name="Holroyd S."/>
            <person name="Jagels K."/>
            <person name="James K.D."/>
            <person name="Lennard N."/>
            <person name="Line A."/>
            <person name="Mayes R."/>
            <person name="Moule S."/>
            <person name="Mungall K."/>
            <person name="Ormond D."/>
            <person name="Quail M.A."/>
            <person name="Rabbinowitsch E."/>
            <person name="Rutherford K.M."/>
            <person name="Sanders M."/>
            <person name="Sharp S."/>
            <person name="Simmonds M."/>
            <person name="Stevens K."/>
            <person name="Whitehead S."/>
            <person name="Barrell B.G."/>
            <person name="Spratt B.G."/>
            <person name="Parkhill J."/>
        </authorList>
    </citation>
    <scope>NUCLEOTIDE SEQUENCE [LARGE SCALE GENOMIC DNA]</scope>
    <source>
        <strain>MSSA476</strain>
    </source>
</reference>
<protein>
    <recommendedName>
        <fullName>Peroxide-responsive repressor PerR</fullName>
    </recommendedName>
</protein>
<dbReference type="EMBL" id="BX571857">
    <property type="protein sequence ID" value="CAG43588.1"/>
    <property type="molecule type" value="Genomic_DNA"/>
</dbReference>
<dbReference type="RefSeq" id="WP_000110011.1">
    <property type="nucleotide sequence ID" value="NC_002953.3"/>
</dbReference>
<dbReference type="SMR" id="Q6G873"/>
<dbReference type="GeneID" id="98346243"/>
<dbReference type="KEGG" id="sas:SAS1783"/>
<dbReference type="HOGENOM" id="CLU_096072_4_2_9"/>
<dbReference type="GO" id="GO:0005737">
    <property type="term" value="C:cytoplasm"/>
    <property type="evidence" value="ECO:0007669"/>
    <property type="project" value="UniProtKB-SubCell"/>
</dbReference>
<dbReference type="GO" id="GO:0003700">
    <property type="term" value="F:DNA-binding transcription factor activity"/>
    <property type="evidence" value="ECO:0007669"/>
    <property type="project" value="InterPro"/>
</dbReference>
<dbReference type="GO" id="GO:0000976">
    <property type="term" value="F:transcription cis-regulatory region binding"/>
    <property type="evidence" value="ECO:0007669"/>
    <property type="project" value="TreeGrafter"/>
</dbReference>
<dbReference type="GO" id="GO:0008270">
    <property type="term" value="F:zinc ion binding"/>
    <property type="evidence" value="ECO:0007669"/>
    <property type="project" value="TreeGrafter"/>
</dbReference>
<dbReference type="GO" id="GO:0045892">
    <property type="term" value="P:negative regulation of DNA-templated transcription"/>
    <property type="evidence" value="ECO:0007669"/>
    <property type="project" value="TreeGrafter"/>
</dbReference>
<dbReference type="GO" id="GO:1900376">
    <property type="term" value="P:regulation of secondary metabolite biosynthetic process"/>
    <property type="evidence" value="ECO:0007669"/>
    <property type="project" value="TreeGrafter"/>
</dbReference>
<dbReference type="CDD" id="cd07153">
    <property type="entry name" value="Fur_like"/>
    <property type="match status" value="1"/>
</dbReference>
<dbReference type="FunFam" id="1.10.10.10:FF:000147">
    <property type="entry name" value="Fur family transcriptional regulator"/>
    <property type="match status" value="1"/>
</dbReference>
<dbReference type="FunFam" id="3.30.1490.190:FF:000003">
    <property type="entry name" value="Fur family transcriptional regulator"/>
    <property type="match status" value="1"/>
</dbReference>
<dbReference type="Gene3D" id="3.30.1490.190">
    <property type="match status" value="1"/>
</dbReference>
<dbReference type="Gene3D" id="1.10.10.10">
    <property type="entry name" value="Winged helix-like DNA-binding domain superfamily/Winged helix DNA-binding domain"/>
    <property type="match status" value="1"/>
</dbReference>
<dbReference type="InterPro" id="IPR002481">
    <property type="entry name" value="FUR"/>
</dbReference>
<dbReference type="InterPro" id="IPR043135">
    <property type="entry name" value="Fur_C"/>
</dbReference>
<dbReference type="InterPro" id="IPR036388">
    <property type="entry name" value="WH-like_DNA-bd_sf"/>
</dbReference>
<dbReference type="InterPro" id="IPR036390">
    <property type="entry name" value="WH_DNA-bd_sf"/>
</dbReference>
<dbReference type="PANTHER" id="PTHR33202:SF8">
    <property type="entry name" value="PEROXIDE-RESPONSIVE REPRESSOR PERR"/>
    <property type="match status" value="1"/>
</dbReference>
<dbReference type="PANTHER" id="PTHR33202">
    <property type="entry name" value="ZINC UPTAKE REGULATION PROTEIN"/>
    <property type="match status" value="1"/>
</dbReference>
<dbReference type="Pfam" id="PF01475">
    <property type="entry name" value="FUR"/>
    <property type="match status" value="1"/>
</dbReference>
<dbReference type="SUPFAM" id="SSF46785">
    <property type="entry name" value="Winged helix' DNA-binding domain"/>
    <property type="match status" value="1"/>
</dbReference>
<feature type="chain" id="PRO_0000289013" description="Peroxide-responsive repressor PerR">
    <location>
        <begin position="1"/>
        <end position="148"/>
    </location>
</feature>
<feature type="region of interest" description="DNA-binding" evidence="1">
    <location>
        <begin position="1"/>
        <end position="84"/>
    </location>
</feature>
<feature type="binding site" evidence="1">
    <location>
        <position position="102"/>
    </location>
    <ligand>
        <name>Zn(2+)</name>
        <dbReference type="ChEBI" id="CHEBI:29105"/>
    </ligand>
</feature>
<feature type="binding site" evidence="1">
    <location>
        <position position="105"/>
    </location>
    <ligand>
        <name>Zn(2+)</name>
        <dbReference type="ChEBI" id="CHEBI:29105"/>
    </ligand>
</feature>
<feature type="binding site" evidence="1">
    <location>
        <position position="142"/>
    </location>
    <ligand>
        <name>Zn(2+)</name>
        <dbReference type="ChEBI" id="CHEBI:29105"/>
    </ligand>
</feature>
<feature type="binding site" evidence="1">
    <location>
        <position position="145"/>
    </location>
    <ligand>
        <name>Zn(2+)</name>
        <dbReference type="ChEBI" id="CHEBI:29105"/>
    </ligand>
</feature>
<sequence>MSVEIESIEHELEESIASLRQAGVRITPQRQAILRYLISSHTHPTADEIYQALSPDFPNISVATIYNNLRVFKDIGIVKELTYGDSSSRFDFNTHNHYHIICEQCGKIVDFQYPQLNEIERLAQHMTDFDVTHHRMEIYGVCKECQDK</sequence>
<name>PERR_STAAS</name>
<organism>
    <name type="scientific">Staphylococcus aureus (strain MSSA476)</name>
    <dbReference type="NCBI Taxonomy" id="282459"/>
    <lineage>
        <taxon>Bacteria</taxon>
        <taxon>Bacillati</taxon>
        <taxon>Bacillota</taxon>
        <taxon>Bacilli</taxon>
        <taxon>Bacillales</taxon>
        <taxon>Staphylococcaceae</taxon>
        <taxon>Staphylococcus</taxon>
    </lineage>
</organism>
<proteinExistence type="inferred from homology"/>
<keyword id="KW-0963">Cytoplasm</keyword>
<keyword id="KW-0238">DNA-binding</keyword>
<keyword id="KW-0464">Manganese</keyword>
<keyword id="KW-0479">Metal-binding</keyword>
<keyword id="KW-0678">Repressor</keyword>
<keyword id="KW-0804">Transcription</keyword>
<keyword id="KW-0805">Transcription regulation</keyword>
<keyword id="KW-0862">Zinc</keyword>
<gene>
    <name type="primary">perR</name>
    <name type="ordered locus">SAS1783</name>
</gene>
<comment type="function">
    <text evidence="1">Manganese-dependent repressor that controls a regulon of oxidative stress resistance and iron-storage proteins. May act as a hydrogen peroxide and organic hydroperoxide sensor (By similarity).</text>
</comment>
<comment type="subcellular location">
    <subcellularLocation>
        <location evidence="1">Cytoplasm</location>
    </subcellularLocation>
</comment>
<comment type="similarity">
    <text evidence="2">Belongs to the Fur family.</text>
</comment>
<accession>Q6G873</accession>
<evidence type="ECO:0000250" key="1"/>
<evidence type="ECO:0000305" key="2"/>